<comment type="function">
    <text evidence="1">Endonuclease that specifically degrades the RNA of RNA-DNA hybrids.</text>
</comment>
<comment type="catalytic activity">
    <reaction evidence="1">
        <text>Endonucleolytic cleavage to 5'-phosphomonoester.</text>
        <dbReference type="EC" id="3.1.26.4"/>
    </reaction>
</comment>
<comment type="cofactor">
    <cofactor evidence="1">
        <name>Mn(2+)</name>
        <dbReference type="ChEBI" id="CHEBI:29035"/>
    </cofactor>
    <cofactor evidence="1">
        <name>Mg(2+)</name>
        <dbReference type="ChEBI" id="CHEBI:18420"/>
    </cofactor>
    <text evidence="1">Manganese or magnesium. Binds 1 divalent metal ion per monomer in the absence of substrate. May bind a second metal ion after substrate binding.</text>
</comment>
<comment type="subcellular location">
    <subcellularLocation>
        <location evidence="1">Cytoplasm</location>
    </subcellularLocation>
</comment>
<comment type="similarity">
    <text evidence="1">Belongs to the RNase HII family.</text>
</comment>
<protein>
    <recommendedName>
        <fullName evidence="1">Ribonuclease HII</fullName>
        <shortName evidence="1">RNase HII</shortName>
        <ecNumber evidence="1">3.1.26.4</ecNumber>
    </recommendedName>
</protein>
<feature type="chain" id="PRO_0000235779" description="Ribonuclease HII">
    <location>
        <begin position="1"/>
        <end position="199"/>
    </location>
</feature>
<feature type="domain" description="RNase H type-2" evidence="2">
    <location>
        <begin position="11"/>
        <end position="199"/>
    </location>
</feature>
<feature type="binding site" evidence="1">
    <location>
        <position position="17"/>
    </location>
    <ligand>
        <name>a divalent metal cation</name>
        <dbReference type="ChEBI" id="CHEBI:60240"/>
    </ligand>
</feature>
<feature type="binding site" evidence="1">
    <location>
        <position position="18"/>
    </location>
    <ligand>
        <name>a divalent metal cation</name>
        <dbReference type="ChEBI" id="CHEBI:60240"/>
    </ligand>
</feature>
<feature type="binding site" evidence="1">
    <location>
        <position position="113"/>
    </location>
    <ligand>
        <name>a divalent metal cation</name>
        <dbReference type="ChEBI" id="CHEBI:60240"/>
    </ligand>
</feature>
<reference key="1">
    <citation type="submission" date="2005-08" db="EMBL/GenBank/DDBJ databases">
        <title>Complete sequence of Synechococcus sp. CC9902.</title>
        <authorList>
            <person name="Copeland A."/>
            <person name="Lucas S."/>
            <person name="Lapidus A."/>
            <person name="Barry K."/>
            <person name="Detter J.C."/>
            <person name="Glavina T."/>
            <person name="Hammon N."/>
            <person name="Israni S."/>
            <person name="Pitluck S."/>
            <person name="Martinez M."/>
            <person name="Schmutz J."/>
            <person name="Larimer F."/>
            <person name="Land M."/>
            <person name="Kyrpides N."/>
            <person name="Ivanova N."/>
            <person name="Richardson P."/>
        </authorList>
    </citation>
    <scope>NUCLEOTIDE SEQUENCE [LARGE SCALE GENOMIC DNA]</scope>
    <source>
        <strain>CC9902</strain>
    </source>
</reference>
<gene>
    <name evidence="1" type="primary">rnhB</name>
    <name type="ordered locus">Syncc9902_2028</name>
</gene>
<name>RNH2_SYNS9</name>
<evidence type="ECO:0000255" key="1">
    <source>
        <dbReference type="HAMAP-Rule" id="MF_00052"/>
    </source>
</evidence>
<evidence type="ECO:0000255" key="2">
    <source>
        <dbReference type="PROSITE-ProRule" id="PRU01319"/>
    </source>
</evidence>
<accession>Q3AW47</accession>
<proteinExistence type="inferred from homology"/>
<sequence>MTRLEEIPSGSRVAGVDEVGRGCLFGPVFAAAVVLDEVAEQRLWQAGLTDSKKLSAKRRAGLVPLIEQHCLTRGLGQASAHEIDAVGIRGATERAMLRALQKLAHPPNVVLVDGNLPLRLWSGSQQTVVGGDSRSAAIAAASVLAKEARDALIRRLSDQFPGYGLERHAGYGTALHQKALLALGPTSLHRRSFLRRLLG</sequence>
<organism>
    <name type="scientific">Synechococcus sp. (strain CC9902)</name>
    <dbReference type="NCBI Taxonomy" id="316279"/>
    <lineage>
        <taxon>Bacteria</taxon>
        <taxon>Bacillati</taxon>
        <taxon>Cyanobacteriota</taxon>
        <taxon>Cyanophyceae</taxon>
        <taxon>Synechococcales</taxon>
        <taxon>Synechococcaceae</taxon>
        <taxon>Synechococcus</taxon>
    </lineage>
</organism>
<dbReference type="EC" id="3.1.26.4" evidence="1"/>
<dbReference type="EMBL" id="CP000097">
    <property type="protein sequence ID" value="ABB26986.1"/>
    <property type="molecule type" value="Genomic_DNA"/>
</dbReference>
<dbReference type="RefSeq" id="WP_011360775.1">
    <property type="nucleotide sequence ID" value="NC_007513.1"/>
</dbReference>
<dbReference type="SMR" id="Q3AW47"/>
<dbReference type="STRING" id="316279.Syncc9902_2028"/>
<dbReference type="KEGG" id="sye:Syncc9902_2028"/>
<dbReference type="eggNOG" id="COG0164">
    <property type="taxonomic scope" value="Bacteria"/>
</dbReference>
<dbReference type="HOGENOM" id="CLU_036532_3_1_3"/>
<dbReference type="OrthoDB" id="9803420at2"/>
<dbReference type="Proteomes" id="UP000002712">
    <property type="component" value="Chromosome"/>
</dbReference>
<dbReference type="GO" id="GO:0005737">
    <property type="term" value="C:cytoplasm"/>
    <property type="evidence" value="ECO:0007669"/>
    <property type="project" value="UniProtKB-SubCell"/>
</dbReference>
<dbReference type="GO" id="GO:0032299">
    <property type="term" value="C:ribonuclease H2 complex"/>
    <property type="evidence" value="ECO:0007669"/>
    <property type="project" value="TreeGrafter"/>
</dbReference>
<dbReference type="GO" id="GO:0030145">
    <property type="term" value="F:manganese ion binding"/>
    <property type="evidence" value="ECO:0007669"/>
    <property type="project" value="UniProtKB-UniRule"/>
</dbReference>
<dbReference type="GO" id="GO:0003723">
    <property type="term" value="F:RNA binding"/>
    <property type="evidence" value="ECO:0007669"/>
    <property type="project" value="InterPro"/>
</dbReference>
<dbReference type="GO" id="GO:0004523">
    <property type="term" value="F:RNA-DNA hybrid ribonuclease activity"/>
    <property type="evidence" value="ECO:0007669"/>
    <property type="project" value="UniProtKB-UniRule"/>
</dbReference>
<dbReference type="GO" id="GO:0043137">
    <property type="term" value="P:DNA replication, removal of RNA primer"/>
    <property type="evidence" value="ECO:0007669"/>
    <property type="project" value="TreeGrafter"/>
</dbReference>
<dbReference type="GO" id="GO:0006298">
    <property type="term" value="P:mismatch repair"/>
    <property type="evidence" value="ECO:0007669"/>
    <property type="project" value="TreeGrafter"/>
</dbReference>
<dbReference type="CDD" id="cd07182">
    <property type="entry name" value="RNase_HII_bacteria_HII_like"/>
    <property type="match status" value="1"/>
</dbReference>
<dbReference type="Gene3D" id="3.30.420.10">
    <property type="entry name" value="Ribonuclease H-like superfamily/Ribonuclease H"/>
    <property type="match status" value="1"/>
</dbReference>
<dbReference type="HAMAP" id="MF_00052_B">
    <property type="entry name" value="RNase_HII_B"/>
    <property type="match status" value="1"/>
</dbReference>
<dbReference type="InterPro" id="IPR022898">
    <property type="entry name" value="RNase_HII"/>
</dbReference>
<dbReference type="InterPro" id="IPR001352">
    <property type="entry name" value="RNase_HII/HIII"/>
</dbReference>
<dbReference type="InterPro" id="IPR024567">
    <property type="entry name" value="RNase_HII/HIII_dom"/>
</dbReference>
<dbReference type="InterPro" id="IPR012337">
    <property type="entry name" value="RNaseH-like_sf"/>
</dbReference>
<dbReference type="InterPro" id="IPR036397">
    <property type="entry name" value="RNaseH_sf"/>
</dbReference>
<dbReference type="NCBIfam" id="NF000595">
    <property type="entry name" value="PRK00015.1-3"/>
    <property type="match status" value="1"/>
</dbReference>
<dbReference type="NCBIfam" id="NF010537">
    <property type="entry name" value="PRK13925.1"/>
    <property type="match status" value="1"/>
</dbReference>
<dbReference type="PANTHER" id="PTHR10954">
    <property type="entry name" value="RIBONUCLEASE H2 SUBUNIT A"/>
    <property type="match status" value="1"/>
</dbReference>
<dbReference type="PANTHER" id="PTHR10954:SF18">
    <property type="entry name" value="RIBONUCLEASE HII"/>
    <property type="match status" value="1"/>
</dbReference>
<dbReference type="Pfam" id="PF01351">
    <property type="entry name" value="RNase_HII"/>
    <property type="match status" value="1"/>
</dbReference>
<dbReference type="SUPFAM" id="SSF53098">
    <property type="entry name" value="Ribonuclease H-like"/>
    <property type="match status" value="1"/>
</dbReference>
<dbReference type="PROSITE" id="PS51975">
    <property type="entry name" value="RNASE_H_2"/>
    <property type="match status" value="1"/>
</dbReference>
<keyword id="KW-0963">Cytoplasm</keyword>
<keyword id="KW-0255">Endonuclease</keyword>
<keyword id="KW-0378">Hydrolase</keyword>
<keyword id="KW-0464">Manganese</keyword>
<keyword id="KW-0479">Metal-binding</keyword>
<keyword id="KW-0540">Nuclease</keyword>
<keyword id="KW-1185">Reference proteome</keyword>